<keyword id="KW-0066">ATP synthesis</keyword>
<keyword id="KW-0067">ATP-binding</keyword>
<keyword id="KW-0997">Cell inner membrane</keyword>
<keyword id="KW-1003">Cell membrane</keyword>
<keyword id="KW-0139">CF(1)</keyword>
<keyword id="KW-0375">Hydrogen ion transport</keyword>
<keyword id="KW-0406">Ion transport</keyword>
<keyword id="KW-0472">Membrane</keyword>
<keyword id="KW-0547">Nucleotide-binding</keyword>
<keyword id="KW-1278">Translocase</keyword>
<keyword id="KW-0813">Transport</keyword>
<protein>
    <recommendedName>
        <fullName evidence="1">ATP synthase subunit alpha</fullName>
        <ecNumber evidence="1">7.1.2.2</ecNumber>
    </recommendedName>
    <alternativeName>
        <fullName evidence="1">ATP synthase F1 sector subunit alpha</fullName>
    </alternativeName>
    <alternativeName>
        <fullName evidence="1">F-ATPase subunit alpha</fullName>
    </alternativeName>
</protein>
<dbReference type="EC" id="7.1.2.2" evidence="1"/>
<dbReference type="EMBL" id="CP001111">
    <property type="protein sequence ID" value="ACF53212.1"/>
    <property type="molecule type" value="Genomic_DNA"/>
</dbReference>
<dbReference type="RefSeq" id="WP_012512168.1">
    <property type="nucleotide sequence ID" value="NC_011071.1"/>
</dbReference>
<dbReference type="SMR" id="B4SJS1"/>
<dbReference type="STRING" id="391008.Smal_3513"/>
<dbReference type="KEGG" id="smt:Smal_3513"/>
<dbReference type="eggNOG" id="COG0056">
    <property type="taxonomic scope" value="Bacteria"/>
</dbReference>
<dbReference type="HOGENOM" id="CLU_010091_2_1_6"/>
<dbReference type="OrthoDB" id="9803053at2"/>
<dbReference type="Proteomes" id="UP000001867">
    <property type="component" value="Chromosome"/>
</dbReference>
<dbReference type="GO" id="GO:0005886">
    <property type="term" value="C:plasma membrane"/>
    <property type="evidence" value="ECO:0007669"/>
    <property type="project" value="UniProtKB-SubCell"/>
</dbReference>
<dbReference type="GO" id="GO:0045259">
    <property type="term" value="C:proton-transporting ATP synthase complex"/>
    <property type="evidence" value="ECO:0007669"/>
    <property type="project" value="UniProtKB-KW"/>
</dbReference>
<dbReference type="GO" id="GO:0043531">
    <property type="term" value="F:ADP binding"/>
    <property type="evidence" value="ECO:0007669"/>
    <property type="project" value="TreeGrafter"/>
</dbReference>
<dbReference type="GO" id="GO:0005524">
    <property type="term" value="F:ATP binding"/>
    <property type="evidence" value="ECO:0007669"/>
    <property type="project" value="UniProtKB-UniRule"/>
</dbReference>
<dbReference type="GO" id="GO:0046933">
    <property type="term" value="F:proton-transporting ATP synthase activity, rotational mechanism"/>
    <property type="evidence" value="ECO:0007669"/>
    <property type="project" value="UniProtKB-UniRule"/>
</dbReference>
<dbReference type="CDD" id="cd18113">
    <property type="entry name" value="ATP-synt_F1_alpha_C"/>
    <property type="match status" value="1"/>
</dbReference>
<dbReference type="CDD" id="cd18116">
    <property type="entry name" value="ATP-synt_F1_alpha_N"/>
    <property type="match status" value="1"/>
</dbReference>
<dbReference type="CDD" id="cd01132">
    <property type="entry name" value="F1-ATPase_alpha_CD"/>
    <property type="match status" value="1"/>
</dbReference>
<dbReference type="FunFam" id="1.20.150.20:FF:000001">
    <property type="entry name" value="ATP synthase subunit alpha"/>
    <property type="match status" value="1"/>
</dbReference>
<dbReference type="FunFam" id="2.40.30.20:FF:000001">
    <property type="entry name" value="ATP synthase subunit alpha"/>
    <property type="match status" value="1"/>
</dbReference>
<dbReference type="FunFam" id="3.40.50.300:FF:000002">
    <property type="entry name" value="ATP synthase subunit alpha"/>
    <property type="match status" value="1"/>
</dbReference>
<dbReference type="Gene3D" id="2.40.30.20">
    <property type="match status" value="1"/>
</dbReference>
<dbReference type="Gene3D" id="1.20.150.20">
    <property type="entry name" value="ATP synthase alpha/beta chain, C-terminal domain"/>
    <property type="match status" value="1"/>
</dbReference>
<dbReference type="Gene3D" id="3.40.50.300">
    <property type="entry name" value="P-loop containing nucleotide triphosphate hydrolases"/>
    <property type="match status" value="1"/>
</dbReference>
<dbReference type="HAMAP" id="MF_01346">
    <property type="entry name" value="ATP_synth_alpha_bact"/>
    <property type="match status" value="1"/>
</dbReference>
<dbReference type="InterPro" id="IPR023366">
    <property type="entry name" value="ATP_synth_asu-like_sf"/>
</dbReference>
<dbReference type="InterPro" id="IPR000793">
    <property type="entry name" value="ATP_synth_asu_C"/>
</dbReference>
<dbReference type="InterPro" id="IPR038376">
    <property type="entry name" value="ATP_synth_asu_C_sf"/>
</dbReference>
<dbReference type="InterPro" id="IPR033732">
    <property type="entry name" value="ATP_synth_F1_a_nt-bd_dom"/>
</dbReference>
<dbReference type="InterPro" id="IPR005294">
    <property type="entry name" value="ATP_synth_F1_asu"/>
</dbReference>
<dbReference type="InterPro" id="IPR020003">
    <property type="entry name" value="ATPase_a/bsu_AS"/>
</dbReference>
<dbReference type="InterPro" id="IPR004100">
    <property type="entry name" value="ATPase_F1/V1/A1_a/bsu_N"/>
</dbReference>
<dbReference type="InterPro" id="IPR036121">
    <property type="entry name" value="ATPase_F1/V1/A1_a/bsu_N_sf"/>
</dbReference>
<dbReference type="InterPro" id="IPR000194">
    <property type="entry name" value="ATPase_F1/V1/A1_a/bsu_nucl-bd"/>
</dbReference>
<dbReference type="InterPro" id="IPR027417">
    <property type="entry name" value="P-loop_NTPase"/>
</dbReference>
<dbReference type="NCBIfam" id="TIGR00962">
    <property type="entry name" value="atpA"/>
    <property type="match status" value="1"/>
</dbReference>
<dbReference type="NCBIfam" id="NF009884">
    <property type="entry name" value="PRK13343.1"/>
    <property type="match status" value="1"/>
</dbReference>
<dbReference type="PANTHER" id="PTHR48082">
    <property type="entry name" value="ATP SYNTHASE SUBUNIT ALPHA, MITOCHONDRIAL"/>
    <property type="match status" value="1"/>
</dbReference>
<dbReference type="PANTHER" id="PTHR48082:SF2">
    <property type="entry name" value="ATP SYNTHASE SUBUNIT ALPHA, MITOCHONDRIAL"/>
    <property type="match status" value="1"/>
</dbReference>
<dbReference type="Pfam" id="PF00006">
    <property type="entry name" value="ATP-synt_ab"/>
    <property type="match status" value="1"/>
</dbReference>
<dbReference type="Pfam" id="PF00306">
    <property type="entry name" value="ATP-synt_ab_C"/>
    <property type="match status" value="1"/>
</dbReference>
<dbReference type="Pfam" id="PF02874">
    <property type="entry name" value="ATP-synt_ab_N"/>
    <property type="match status" value="1"/>
</dbReference>
<dbReference type="SUPFAM" id="SSF47917">
    <property type="entry name" value="C-terminal domain of alpha and beta subunits of F1 ATP synthase"/>
    <property type="match status" value="1"/>
</dbReference>
<dbReference type="SUPFAM" id="SSF50615">
    <property type="entry name" value="N-terminal domain of alpha and beta subunits of F1 ATP synthase"/>
    <property type="match status" value="1"/>
</dbReference>
<dbReference type="SUPFAM" id="SSF52540">
    <property type="entry name" value="P-loop containing nucleoside triphosphate hydrolases"/>
    <property type="match status" value="1"/>
</dbReference>
<dbReference type="PROSITE" id="PS00152">
    <property type="entry name" value="ATPASE_ALPHA_BETA"/>
    <property type="match status" value="1"/>
</dbReference>
<comment type="function">
    <text evidence="1">Produces ATP from ADP in the presence of a proton gradient across the membrane. The alpha chain is a regulatory subunit.</text>
</comment>
<comment type="catalytic activity">
    <reaction evidence="1">
        <text>ATP + H2O + 4 H(+)(in) = ADP + phosphate + 5 H(+)(out)</text>
        <dbReference type="Rhea" id="RHEA:57720"/>
        <dbReference type="ChEBI" id="CHEBI:15377"/>
        <dbReference type="ChEBI" id="CHEBI:15378"/>
        <dbReference type="ChEBI" id="CHEBI:30616"/>
        <dbReference type="ChEBI" id="CHEBI:43474"/>
        <dbReference type="ChEBI" id="CHEBI:456216"/>
        <dbReference type="EC" id="7.1.2.2"/>
    </reaction>
</comment>
<comment type="subunit">
    <text evidence="1">F-type ATPases have 2 components, CF(1) - the catalytic core - and CF(0) - the membrane proton channel. CF(1) has five subunits: alpha(3), beta(3), gamma(1), delta(1), epsilon(1). CF(0) has three main subunits: a(1), b(2) and c(9-12). The alpha and beta chains form an alternating ring which encloses part of the gamma chain. CF(1) is attached to CF(0) by a central stalk formed by the gamma and epsilon chains, while a peripheral stalk is formed by the delta and b chains.</text>
</comment>
<comment type="subcellular location">
    <subcellularLocation>
        <location evidence="1">Cell inner membrane</location>
        <topology evidence="1">Peripheral membrane protein</topology>
    </subcellularLocation>
</comment>
<comment type="similarity">
    <text evidence="1">Belongs to the ATPase alpha/beta chains family.</text>
</comment>
<proteinExistence type="inferred from homology"/>
<sequence length="515" mass="55437">MATTLNPSEISELIKNRIEKVKLAAESRNEGTVTSVSDGIVRIFGLADVMQGEMIELPNNSFALALNLERDSVGAVVLGGYEHLREGDVAKTTGRILEVPVGPELLGRVVNALGEPIDGKGPLGTDLTAPVERVAPGVIWRKSVDQPVQTGYKSVDSMIPIGRGQRELIIGDRQTGKTAMAIDAVINQKGTGIKCVYVAIGQKASTIANIVRKLEENGALAHTVVVAATASESAAMQYISAYSGCTMGEYFMDRGEDALIVYDDLSKQAVAYRQISLLLKRPPGREAYPGDVFYLHSRLLERAARVSEEYVEKFTEGKVTGKTGSLTALPIIETQAGDVSAFVPTNVISITDGQIFLETDLFNAGIRPAVNAGISVSRVGGSAQTKIIKKLSGGIRISLAQYRELAAFAQFASDLDEATRKQLERGQRVTELMKQKQYAPMSIANQALSIYAVNEGYLDDVPVNKLLAFEEGLHAHFANTQGELINKVNATGGWDNDIEGAFKKGIAEFKTTGSW</sequence>
<organism>
    <name type="scientific">Stenotrophomonas maltophilia (strain R551-3)</name>
    <dbReference type="NCBI Taxonomy" id="391008"/>
    <lineage>
        <taxon>Bacteria</taxon>
        <taxon>Pseudomonadati</taxon>
        <taxon>Pseudomonadota</taxon>
        <taxon>Gammaproteobacteria</taxon>
        <taxon>Lysobacterales</taxon>
        <taxon>Lysobacteraceae</taxon>
        <taxon>Stenotrophomonas</taxon>
        <taxon>Stenotrophomonas maltophilia group</taxon>
    </lineage>
</organism>
<name>ATPA_STRM5</name>
<accession>B4SJS1</accession>
<reference key="1">
    <citation type="submission" date="2008-06" db="EMBL/GenBank/DDBJ databases">
        <title>Complete sequence of Stenotrophomonas maltophilia R551-3.</title>
        <authorList>
            <consortium name="US DOE Joint Genome Institute"/>
            <person name="Lucas S."/>
            <person name="Copeland A."/>
            <person name="Lapidus A."/>
            <person name="Glavina del Rio T."/>
            <person name="Dalin E."/>
            <person name="Tice H."/>
            <person name="Pitluck S."/>
            <person name="Chain P."/>
            <person name="Malfatti S."/>
            <person name="Shin M."/>
            <person name="Vergez L."/>
            <person name="Lang D."/>
            <person name="Schmutz J."/>
            <person name="Larimer F."/>
            <person name="Land M."/>
            <person name="Hauser L."/>
            <person name="Kyrpides N."/>
            <person name="Mikhailova N."/>
            <person name="Taghavi S."/>
            <person name="Monchy S."/>
            <person name="Newman L."/>
            <person name="Vangronsveld J."/>
            <person name="van der Lelie D."/>
            <person name="Richardson P."/>
        </authorList>
    </citation>
    <scope>NUCLEOTIDE SEQUENCE [LARGE SCALE GENOMIC DNA]</scope>
    <source>
        <strain>R551-3</strain>
    </source>
</reference>
<feature type="chain" id="PRO_1000143441" description="ATP synthase subunit alpha">
    <location>
        <begin position="1"/>
        <end position="515"/>
    </location>
</feature>
<feature type="binding site" evidence="1">
    <location>
        <begin position="171"/>
        <end position="178"/>
    </location>
    <ligand>
        <name>ATP</name>
        <dbReference type="ChEBI" id="CHEBI:30616"/>
    </ligand>
</feature>
<feature type="site" description="Required for activity" evidence="1">
    <location>
        <position position="375"/>
    </location>
</feature>
<gene>
    <name evidence="1" type="primary">atpA</name>
    <name type="ordered locus">Smal_3513</name>
</gene>
<evidence type="ECO:0000255" key="1">
    <source>
        <dbReference type="HAMAP-Rule" id="MF_01346"/>
    </source>
</evidence>